<gene>
    <name evidence="1" type="primary">groEL2</name>
    <name evidence="1" type="synonym">groL2</name>
    <name type="ordered locus">AZC_2312</name>
</gene>
<organism>
    <name type="scientific">Azorhizobium caulinodans (strain ATCC 43989 / DSM 5975 / JCM 20966 / LMG 6465 / NBRC 14845 / NCIMB 13405 / ORS 571)</name>
    <dbReference type="NCBI Taxonomy" id="438753"/>
    <lineage>
        <taxon>Bacteria</taxon>
        <taxon>Pseudomonadati</taxon>
        <taxon>Pseudomonadota</taxon>
        <taxon>Alphaproteobacteria</taxon>
        <taxon>Hyphomicrobiales</taxon>
        <taxon>Xanthobacteraceae</taxon>
        <taxon>Azorhizobium</taxon>
    </lineage>
</organism>
<dbReference type="EC" id="5.6.1.7" evidence="1"/>
<dbReference type="EMBL" id="AP009384">
    <property type="protein sequence ID" value="BAF88310.1"/>
    <property type="molecule type" value="Genomic_DNA"/>
</dbReference>
<dbReference type="RefSeq" id="WP_012170839.1">
    <property type="nucleotide sequence ID" value="NC_009937.1"/>
</dbReference>
<dbReference type="SMR" id="A8I5R5"/>
<dbReference type="STRING" id="438753.AZC_2312"/>
<dbReference type="KEGG" id="azc:AZC_2312"/>
<dbReference type="eggNOG" id="COG0459">
    <property type="taxonomic scope" value="Bacteria"/>
</dbReference>
<dbReference type="HOGENOM" id="CLU_016503_3_0_5"/>
<dbReference type="Proteomes" id="UP000000270">
    <property type="component" value="Chromosome"/>
</dbReference>
<dbReference type="GO" id="GO:0005737">
    <property type="term" value="C:cytoplasm"/>
    <property type="evidence" value="ECO:0007669"/>
    <property type="project" value="UniProtKB-SubCell"/>
</dbReference>
<dbReference type="GO" id="GO:0005524">
    <property type="term" value="F:ATP binding"/>
    <property type="evidence" value="ECO:0007669"/>
    <property type="project" value="UniProtKB-UniRule"/>
</dbReference>
<dbReference type="GO" id="GO:0140662">
    <property type="term" value="F:ATP-dependent protein folding chaperone"/>
    <property type="evidence" value="ECO:0007669"/>
    <property type="project" value="InterPro"/>
</dbReference>
<dbReference type="GO" id="GO:0016853">
    <property type="term" value="F:isomerase activity"/>
    <property type="evidence" value="ECO:0007669"/>
    <property type="project" value="UniProtKB-KW"/>
</dbReference>
<dbReference type="GO" id="GO:0051082">
    <property type="term" value="F:unfolded protein binding"/>
    <property type="evidence" value="ECO:0007669"/>
    <property type="project" value="UniProtKB-UniRule"/>
</dbReference>
<dbReference type="GO" id="GO:0042026">
    <property type="term" value="P:protein refolding"/>
    <property type="evidence" value="ECO:0007669"/>
    <property type="project" value="UniProtKB-UniRule"/>
</dbReference>
<dbReference type="CDD" id="cd03344">
    <property type="entry name" value="GroEL"/>
    <property type="match status" value="1"/>
</dbReference>
<dbReference type="FunFam" id="1.10.560.10:FF:000001">
    <property type="entry name" value="60 kDa chaperonin"/>
    <property type="match status" value="1"/>
</dbReference>
<dbReference type="FunFam" id="3.50.7.10:FF:000001">
    <property type="entry name" value="60 kDa chaperonin"/>
    <property type="match status" value="1"/>
</dbReference>
<dbReference type="Gene3D" id="3.50.7.10">
    <property type="entry name" value="GroEL"/>
    <property type="match status" value="1"/>
</dbReference>
<dbReference type="Gene3D" id="1.10.560.10">
    <property type="entry name" value="GroEL-like equatorial domain"/>
    <property type="match status" value="1"/>
</dbReference>
<dbReference type="Gene3D" id="3.30.260.10">
    <property type="entry name" value="TCP-1-like chaperonin intermediate domain"/>
    <property type="match status" value="1"/>
</dbReference>
<dbReference type="HAMAP" id="MF_00600">
    <property type="entry name" value="CH60"/>
    <property type="match status" value="1"/>
</dbReference>
<dbReference type="InterPro" id="IPR018370">
    <property type="entry name" value="Chaperonin_Cpn60_CS"/>
</dbReference>
<dbReference type="InterPro" id="IPR001844">
    <property type="entry name" value="Cpn60/GroEL"/>
</dbReference>
<dbReference type="InterPro" id="IPR002423">
    <property type="entry name" value="Cpn60/GroEL/TCP-1"/>
</dbReference>
<dbReference type="InterPro" id="IPR027409">
    <property type="entry name" value="GroEL-like_apical_dom_sf"/>
</dbReference>
<dbReference type="InterPro" id="IPR027413">
    <property type="entry name" value="GROEL-like_equatorial_sf"/>
</dbReference>
<dbReference type="InterPro" id="IPR027410">
    <property type="entry name" value="TCP-1-like_intermed_sf"/>
</dbReference>
<dbReference type="NCBIfam" id="TIGR02348">
    <property type="entry name" value="GroEL"/>
    <property type="match status" value="1"/>
</dbReference>
<dbReference type="NCBIfam" id="NF000592">
    <property type="entry name" value="PRK00013.1"/>
    <property type="match status" value="1"/>
</dbReference>
<dbReference type="NCBIfam" id="NF009487">
    <property type="entry name" value="PRK12849.1"/>
    <property type="match status" value="1"/>
</dbReference>
<dbReference type="NCBIfam" id="NF009488">
    <property type="entry name" value="PRK12850.1"/>
    <property type="match status" value="1"/>
</dbReference>
<dbReference type="NCBIfam" id="NF009489">
    <property type="entry name" value="PRK12851.1"/>
    <property type="match status" value="1"/>
</dbReference>
<dbReference type="NCBIfam" id="NF010704">
    <property type="entry name" value="PRK14104.1"/>
    <property type="match status" value="1"/>
</dbReference>
<dbReference type="PANTHER" id="PTHR45633">
    <property type="entry name" value="60 KDA HEAT SHOCK PROTEIN, MITOCHONDRIAL"/>
    <property type="match status" value="1"/>
</dbReference>
<dbReference type="Pfam" id="PF00118">
    <property type="entry name" value="Cpn60_TCP1"/>
    <property type="match status" value="1"/>
</dbReference>
<dbReference type="PRINTS" id="PR00298">
    <property type="entry name" value="CHAPERONIN60"/>
</dbReference>
<dbReference type="SUPFAM" id="SSF52029">
    <property type="entry name" value="GroEL apical domain-like"/>
    <property type="match status" value="1"/>
</dbReference>
<dbReference type="SUPFAM" id="SSF48592">
    <property type="entry name" value="GroEL equatorial domain-like"/>
    <property type="match status" value="1"/>
</dbReference>
<dbReference type="SUPFAM" id="SSF54849">
    <property type="entry name" value="GroEL-intermediate domain like"/>
    <property type="match status" value="1"/>
</dbReference>
<dbReference type="PROSITE" id="PS00296">
    <property type="entry name" value="CHAPERONINS_CPN60"/>
    <property type="match status" value="1"/>
</dbReference>
<sequence>MAAKDVKFAGDAREKMLRGVDILANAVKVTLGPKGRNVVIEKSFGAPRITKDGVSVAKEIELEDKFENLGAQLVREVASKTNDLAGDGTTTATVLAQAIVKEGSKAVAAGMNPMDLKRGIDLAVDAIVKDLAAKAKKVTSNAEIAQVGTISANGDADVGKFLAEAMQKVGNEGVITVEEAKTAETELEVVEGMQFDRGYLSPYFVTNAEKMRVEFEDPYILIHEKKLSNLQELLPVLEAVVQSGKPLVIVAEDVEGEALATLVVNKLRGGLKVAAVKAPGFGDRRKAMLQDIAILTGGQAISEDLGIKLENVNLSMLGRAKKVVIEKENTTIVDGNGEKADIEARVAQIKAQIEETTSDYDREKLQERLAKLAGGVAVIRVGGATEVEVKEKKDRVDDALHATRAAVEEGIVPGGGVALLRAIKVLEGLKVENTDQKTGIDIVRRAIQAPARQIVANAGDDGSVVVGKILENETYTFGYNAQTGEYVDMVASGIIDPAKVVRTALQDAASISALIITTEALVVELPKKAAAAPAMPGGGMDF</sequence>
<accession>A8I5R5</accession>
<name>CH602_AZOC5</name>
<keyword id="KW-0067">ATP-binding</keyword>
<keyword id="KW-0143">Chaperone</keyword>
<keyword id="KW-0963">Cytoplasm</keyword>
<keyword id="KW-0413">Isomerase</keyword>
<keyword id="KW-0547">Nucleotide-binding</keyword>
<keyword id="KW-1185">Reference proteome</keyword>
<reference key="1">
    <citation type="submission" date="2007-04" db="EMBL/GenBank/DDBJ databases">
        <title>Complete genome sequence of the nitrogen-fixing bacterium Azorhizobium caulinodans ORS571.</title>
        <authorList>
            <person name="Lee K.B."/>
            <person name="Backer P.D."/>
            <person name="Aono T."/>
            <person name="Liu C.T."/>
            <person name="Suzuki S."/>
            <person name="Suzuki T."/>
            <person name="Kaneko T."/>
            <person name="Yamada M."/>
            <person name="Tabata S."/>
            <person name="Kupfer D.M."/>
            <person name="Najar F.Z."/>
            <person name="Wiley G.B."/>
            <person name="Roe B."/>
            <person name="Binnewies T."/>
            <person name="Ussery D."/>
            <person name="Vereecke D."/>
            <person name="Gevers D."/>
            <person name="Holsters M."/>
            <person name="Oyaizu H."/>
        </authorList>
    </citation>
    <scope>NUCLEOTIDE SEQUENCE [LARGE SCALE GENOMIC DNA]</scope>
    <source>
        <strain>ATCC 43989 / DSM 5975 / JCM 20966 / LMG 6465 / NBRC 14845 / NCIMB 13405 / ORS 571</strain>
    </source>
</reference>
<protein>
    <recommendedName>
        <fullName evidence="1">Chaperonin GroEL 2</fullName>
        <ecNumber evidence="1">5.6.1.7</ecNumber>
    </recommendedName>
    <alternativeName>
        <fullName evidence="1">60 kDa chaperonin 2</fullName>
    </alternativeName>
    <alternativeName>
        <fullName evidence="1">Chaperonin-60 2</fullName>
        <shortName evidence="1">Cpn60 2</shortName>
    </alternativeName>
</protein>
<feature type="chain" id="PRO_0000331973" description="Chaperonin GroEL 2">
    <location>
        <begin position="1"/>
        <end position="542"/>
    </location>
</feature>
<feature type="binding site" evidence="1">
    <location>
        <begin position="30"/>
        <end position="33"/>
    </location>
    <ligand>
        <name>ATP</name>
        <dbReference type="ChEBI" id="CHEBI:30616"/>
    </ligand>
</feature>
<feature type="binding site" evidence="1">
    <location>
        <position position="51"/>
    </location>
    <ligand>
        <name>ATP</name>
        <dbReference type="ChEBI" id="CHEBI:30616"/>
    </ligand>
</feature>
<feature type="binding site" evidence="1">
    <location>
        <begin position="87"/>
        <end position="91"/>
    </location>
    <ligand>
        <name>ATP</name>
        <dbReference type="ChEBI" id="CHEBI:30616"/>
    </ligand>
</feature>
<feature type="binding site" evidence="1">
    <location>
        <position position="415"/>
    </location>
    <ligand>
        <name>ATP</name>
        <dbReference type="ChEBI" id="CHEBI:30616"/>
    </ligand>
</feature>
<feature type="binding site" evidence="1">
    <location>
        <position position="496"/>
    </location>
    <ligand>
        <name>ATP</name>
        <dbReference type="ChEBI" id="CHEBI:30616"/>
    </ligand>
</feature>
<proteinExistence type="inferred from homology"/>
<evidence type="ECO:0000255" key="1">
    <source>
        <dbReference type="HAMAP-Rule" id="MF_00600"/>
    </source>
</evidence>
<comment type="function">
    <text evidence="1">Together with its co-chaperonin GroES, plays an essential role in assisting protein folding. The GroEL-GroES system forms a nano-cage that allows encapsulation of the non-native substrate proteins and provides a physical environment optimized to promote and accelerate protein folding.</text>
</comment>
<comment type="catalytic activity">
    <reaction evidence="1">
        <text>ATP + H2O + a folded polypeptide = ADP + phosphate + an unfolded polypeptide.</text>
        <dbReference type="EC" id="5.6.1.7"/>
    </reaction>
</comment>
<comment type="subunit">
    <text evidence="1">Forms a cylinder of 14 subunits composed of two heptameric rings stacked back-to-back. Interacts with the co-chaperonin GroES.</text>
</comment>
<comment type="subcellular location">
    <subcellularLocation>
        <location evidence="1">Cytoplasm</location>
    </subcellularLocation>
</comment>
<comment type="similarity">
    <text evidence="1">Belongs to the chaperonin (HSP60) family.</text>
</comment>